<keyword id="KW-0378">Hydrolase</keyword>
<keyword id="KW-0597">Phosphoprotein</keyword>
<keyword id="KW-0645">Protease</keyword>
<keyword id="KW-1185">Reference proteome</keyword>
<keyword id="KW-0788">Thiol protease</keyword>
<keyword id="KW-0833">Ubl conjugation pathway</keyword>
<sequence length="469" mass="51289">MEHHQPEHPAPGETRTAEAVSPENHKVLSEPKEHPQDKDAKEADGAAGEQEPVDQASLPAQGQDNFESPPPDASSSQPGPARETRPETETAGACSRLQELPQSPRARQPELDFYCVKWIPWKGEQTPIITQSANGPCPLIAIANILFLQWKVKLPPQKEVITSDELMAHLGDCLLSIKPQEKSEGLQLNFQQNVDDAMTVLPKLATGLDVNVRFTGVSDFEYTPECSVFDLLGIPLYHGWLVDPQSPEAVSAVGKLSYNQLVEKIITCKHSSDTNLVTEGLIAEQFLETTAAQLTYHGLCELTAAAKEGELSVFFRNNHFSTMTKHKGHLYLLVTDQGFLQEEQVVWESLHNVDGDSCFCDSDFHLSHSPGKGPGTGGGSGSPEKQRQVDQDYLIALSLQQQQPPPQGTSGLSDLELAQQLQQEEYQQHQAAQAAPARAPSPQGRGAASGRPAAERRQRPKQESDCVLL</sequence>
<organism>
    <name type="scientific">Bos taurus</name>
    <name type="common">Bovine</name>
    <dbReference type="NCBI Taxonomy" id="9913"/>
    <lineage>
        <taxon>Eukaryota</taxon>
        <taxon>Metazoa</taxon>
        <taxon>Chordata</taxon>
        <taxon>Craniata</taxon>
        <taxon>Vertebrata</taxon>
        <taxon>Euteleostomi</taxon>
        <taxon>Mammalia</taxon>
        <taxon>Eutheria</taxon>
        <taxon>Laurasiatheria</taxon>
        <taxon>Artiodactyla</taxon>
        <taxon>Ruminantia</taxon>
        <taxon>Pecora</taxon>
        <taxon>Bovidae</taxon>
        <taxon>Bovinae</taxon>
        <taxon>Bos</taxon>
    </lineage>
</organism>
<name>MINY1_BOVIN</name>
<protein>
    <recommendedName>
        <fullName>Ubiquitin carboxyl-terminal hydrolase MINDY-1</fullName>
        <ecNumber>3.4.19.12</ecNumber>
    </recommendedName>
    <alternativeName>
        <fullName>Deubiquitinating enzyme MINDY-1</fullName>
    </alternativeName>
    <alternativeName>
        <fullName>Protein FAM63A</fullName>
    </alternativeName>
</protein>
<feature type="chain" id="PRO_0000344036" description="Ubiquitin carboxyl-terminal hydrolase MINDY-1">
    <location>
        <begin position="1"/>
        <end position="469"/>
    </location>
</feature>
<feature type="region of interest" description="Disordered" evidence="2">
    <location>
        <begin position="1"/>
        <end position="105"/>
    </location>
</feature>
<feature type="region of interest" description="Ubiquitin-binding domain (UBD)" evidence="1">
    <location>
        <begin position="388"/>
        <end position="428"/>
    </location>
</feature>
<feature type="region of interest" description="Disordered" evidence="2">
    <location>
        <begin position="401"/>
        <end position="469"/>
    </location>
</feature>
<feature type="compositionally biased region" description="Basic and acidic residues" evidence="2">
    <location>
        <begin position="23"/>
        <end position="44"/>
    </location>
</feature>
<feature type="compositionally biased region" description="Low complexity" evidence="2">
    <location>
        <begin position="415"/>
        <end position="448"/>
    </location>
</feature>
<feature type="compositionally biased region" description="Basic and acidic residues" evidence="2">
    <location>
        <begin position="453"/>
        <end position="469"/>
    </location>
</feature>
<feature type="active site" description="Nucleophile" evidence="1">
    <location>
        <position position="137"/>
    </location>
</feature>
<feature type="active site" description="Proton acceptor" evidence="1">
    <location>
        <position position="319"/>
    </location>
</feature>
<feature type="site" description="Ubiquitin-binding" evidence="1">
    <location>
        <position position="414"/>
    </location>
</feature>
<feature type="site" description="Ubiquitin-binding" evidence="1">
    <location>
        <begin position="417"/>
        <end position="418"/>
    </location>
</feature>
<feature type="site" description="Ubiquitin-binding" evidence="1">
    <location>
        <position position="421"/>
    </location>
</feature>
<feature type="modified residue" description="Phosphoserine" evidence="1">
    <location>
        <position position="103"/>
    </location>
</feature>
<feature type="modified residue" description="Phosphoserine" evidence="1">
    <location>
        <position position="441"/>
    </location>
</feature>
<proteinExistence type="evidence at transcript level"/>
<evidence type="ECO:0000250" key="1">
    <source>
        <dbReference type="UniProtKB" id="Q8N5J2"/>
    </source>
</evidence>
<evidence type="ECO:0000256" key="2">
    <source>
        <dbReference type="SAM" id="MobiDB-lite"/>
    </source>
</evidence>
<evidence type="ECO:0000305" key="3"/>
<dbReference type="EC" id="3.4.19.12"/>
<dbReference type="EMBL" id="BC105561">
    <property type="protein sequence ID" value="AAI05562.1"/>
    <property type="molecule type" value="mRNA"/>
</dbReference>
<dbReference type="RefSeq" id="NP_001039389.1">
    <property type="nucleotide sequence ID" value="NM_001045924.1"/>
</dbReference>
<dbReference type="SMR" id="Q2KJ22"/>
<dbReference type="FunCoup" id="Q2KJ22">
    <property type="interactions" value="724"/>
</dbReference>
<dbReference type="STRING" id="9913.ENSBTAP00000033701"/>
<dbReference type="PaxDb" id="9913-ENSBTAP00000033701"/>
<dbReference type="GeneID" id="505719"/>
<dbReference type="KEGG" id="bta:505719"/>
<dbReference type="CTD" id="55793"/>
<dbReference type="eggNOG" id="KOG2427">
    <property type="taxonomic scope" value="Eukaryota"/>
</dbReference>
<dbReference type="InParanoid" id="Q2KJ22"/>
<dbReference type="OrthoDB" id="10261212at2759"/>
<dbReference type="Proteomes" id="UP000009136">
    <property type="component" value="Unplaced"/>
</dbReference>
<dbReference type="GO" id="GO:0016807">
    <property type="term" value="F:cysteine-type carboxypeptidase activity"/>
    <property type="evidence" value="ECO:0000318"/>
    <property type="project" value="GO_Central"/>
</dbReference>
<dbReference type="GO" id="GO:0004843">
    <property type="term" value="F:cysteine-type deubiquitinase activity"/>
    <property type="evidence" value="ECO:0007669"/>
    <property type="project" value="UniProtKB-EC"/>
</dbReference>
<dbReference type="GO" id="GO:1990380">
    <property type="term" value="F:K48-linked deubiquitinase activity"/>
    <property type="evidence" value="ECO:0000318"/>
    <property type="project" value="GO_Central"/>
</dbReference>
<dbReference type="GO" id="GO:0036435">
    <property type="term" value="F:K48-linked polyubiquitin modification-dependent protein binding"/>
    <property type="evidence" value="ECO:0000250"/>
    <property type="project" value="UniProtKB"/>
</dbReference>
<dbReference type="GO" id="GO:0006508">
    <property type="term" value="P:proteolysis"/>
    <property type="evidence" value="ECO:0007669"/>
    <property type="project" value="UniProtKB-KW"/>
</dbReference>
<dbReference type="InterPro" id="IPR007518">
    <property type="entry name" value="MINDY"/>
</dbReference>
<dbReference type="InterPro" id="IPR033979">
    <property type="entry name" value="MINDY_domain"/>
</dbReference>
<dbReference type="PANTHER" id="PTHR18063">
    <property type="entry name" value="NF-E2 INDUCIBLE PROTEIN"/>
    <property type="match status" value="1"/>
</dbReference>
<dbReference type="PANTHER" id="PTHR18063:SF7">
    <property type="entry name" value="UBIQUITIN CARBOXYL-TERMINAL HYDROLASE MINDY-1"/>
    <property type="match status" value="1"/>
</dbReference>
<dbReference type="Pfam" id="PF04424">
    <property type="entry name" value="MINDY_DUB"/>
    <property type="match status" value="1"/>
</dbReference>
<gene>
    <name type="primary">MINDY1</name>
    <name type="synonym">FAM63A</name>
</gene>
<reference key="1">
    <citation type="submission" date="2005-09" db="EMBL/GenBank/DDBJ databases">
        <authorList>
            <consortium name="NIH - Mammalian Gene Collection (MGC) project"/>
        </authorList>
    </citation>
    <scope>NUCLEOTIDE SEQUENCE [LARGE SCALE MRNA]</scope>
    <source>
        <strain>Hereford</strain>
        <tissue>Uterus</tissue>
    </source>
</reference>
<comment type="function">
    <text evidence="1">Hydrolase that can specifically remove 'Lys-48'-linked conjugated ubiquitin from proteins. Has exodeubiquitinase activity and has a preference for long polyubiquitin chains. May play a regulatory role at the level of protein turnover.</text>
</comment>
<comment type="catalytic activity">
    <reaction evidence="1">
        <text>Thiol-dependent hydrolysis of ester, thioester, amide, peptide and isopeptide bonds formed by the C-terminal Gly of ubiquitin (a 76-residue protein attached to proteins as an intracellular targeting signal).</text>
        <dbReference type="EC" id="3.4.19.12"/>
    </reaction>
</comment>
<comment type="similarity">
    <text evidence="3">Belongs to the MINDY deubiquitinase family. FAM63 subfamily.</text>
</comment>
<accession>Q2KJ22</accession>